<protein>
    <recommendedName>
        <fullName evidence="11">Muscular LMNA-interacting protein</fullName>
    </recommendedName>
    <alternativeName>
        <fullName evidence="9">Cardiac Isl1-interacting protein</fullName>
        <shortName evidence="9">CIP</shortName>
    </alternativeName>
    <alternativeName>
        <fullName>Muscular-enriched A-type laminin-interacting protein</fullName>
    </alternativeName>
</protein>
<proteinExistence type="evidence at protein level"/>
<organism>
    <name type="scientific">Mus musculus</name>
    <name type="common">Mouse</name>
    <dbReference type="NCBI Taxonomy" id="10090"/>
    <lineage>
        <taxon>Eukaryota</taxon>
        <taxon>Metazoa</taxon>
        <taxon>Chordata</taxon>
        <taxon>Craniata</taxon>
        <taxon>Vertebrata</taxon>
        <taxon>Euteleostomi</taxon>
        <taxon>Mammalia</taxon>
        <taxon>Eutheria</taxon>
        <taxon>Euarchontoglires</taxon>
        <taxon>Glires</taxon>
        <taxon>Rodentia</taxon>
        <taxon>Myomorpha</taxon>
        <taxon>Muroidea</taxon>
        <taxon>Muridae</taxon>
        <taxon>Murinae</taxon>
        <taxon>Mus</taxon>
        <taxon>Mus</taxon>
    </lineage>
</organism>
<name>MLIP_MOUSE</name>
<evidence type="ECO:0000256" key="1">
    <source>
        <dbReference type="SAM" id="MobiDB-lite"/>
    </source>
</evidence>
<evidence type="ECO:0000269" key="2">
    <source>
    </source>
</evidence>
<evidence type="ECO:0000269" key="3">
    <source>
    </source>
</evidence>
<evidence type="ECO:0000269" key="4">
    <source>
    </source>
</evidence>
<evidence type="ECO:0000269" key="5">
    <source>
    </source>
</evidence>
<evidence type="ECO:0000269" key="6">
    <source>
    </source>
</evidence>
<evidence type="ECO:0000269" key="7">
    <source>
    </source>
</evidence>
<evidence type="ECO:0000269" key="8">
    <source>
    </source>
</evidence>
<evidence type="ECO:0000303" key="9">
    <source>
    </source>
</evidence>
<evidence type="ECO:0000305" key="10"/>
<evidence type="ECO:0000312" key="11">
    <source>
        <dbReference type="MGI" id="MGI:1916892"/>
    </source>
</evidence>
<evidence type="ECO:0007744" key="12">
    <source>
    </source>
</evidence>
<reference key="1">
    <citation type="journal article" date="2005" name="Science">
        <title>The transcriptional landscape of the mammalian genome.</title>
        <authorList>
            <person name="Carninci P."/>
            <person name="Kasukawa T."/>
            <person name="Katayama S."/>
            <person name="Gough J."/>
            <person name="Frith M.C."/>
            <person name="Maeda N."/>
            <person name="Oyama R."/>
            <person name="Ravasi T."/>
            <person name="Lenhard B."/>
            <person name="Wells C."/>
            <person name="Kodzius R."/>
            <person name="Shimokawa K."/>
            <person name="Bajic V.B."/>
            <person name="Brenner S.E."/>
            <person name="Batalov S."/>
            <person name="Forrest A.R."/>
            <person name="Zavolan M."/>
            <person name="Davis M.J."/>
            <person name="Wilming L.G."/>
            <person name="Aidinis V."/>
            <person name="Allen J.E."/>
            <person name="Ambesi-Impiombato A."/>
            <person name="Apweiler R."/>
            <person name="Aturaliya R.N."/>
            <person name="Bailey T.L."/>
            <person name="Bansal M."/>
            <person name="Baxter L."/>
            <person name="Beisel K.W."/>
            <person name="Bersano T."/>
            <person name="Bono H."/>
            <person name="Chalk A.M."/>
            <person name="Chiu K.P."/>
            <person name="Choudhary V."/>
            <person name="Christoffels A."/>
            <person name="Clutterbuck D.R."/>
            <person name="Crowe M.L."/>
            <person name="Dalla E."/>
            <person name="Dalrymple B.P."/>
            <person name="de Bono B."/>
            <person name="Della Gatta G."/>
            <person name="di Bernardo D."/>
            <person name="Down T."/>
            <person name="Engstrom P."/>
            <person name="Fagiolini M."/>
            <person name="Faulkner G."/>
            <person name="Fletcher C.F."/>
            <person name="Fukushima T."/>
            <person name="Furuno M."/>
            <person name="Futaki S."/>
            <person name="Gariboldi M."/>
            <person name="Georgii-Hemming P."/>
            <person name="Gingeras T.R."/>
            <person name="Gojobori T."/>
            <person name="Green R.E."/>
            <person name="Gustincich S."/>
            <person name="Harbers M."/>
            <person name="Hayashi Y."/>
            <person name="Hensch T.K."/>
            <person name="Hirokawa N."/>
            <person name="Hill D."/>
            <person name="Huminiecki L."/>
            <person name="Iacono M."/>
            <person name="Ikeo K."/>
            <person name="Iwama A."/>
            <person name="Ishikawa T."/>
            <person name="Jakt M."/>
            <person name="Kanapin A."/>
            <person name="Katoh M."/>
            <person name="Kawasawa Y."/>
            <person name="Kelso J."/>
            <person name="Kitamura H."/>
            <person name="Kitano H."/>
            <person name="Kollias G."/>
            <person name="Krishnan S.P."/>
            <person name="Kruger A."/>
            <person name="Kummerfeld S.K."/>
            <person name="Kurochkin I.V."/>
            <person name="Lareau L.F."/>
            <person name="Lazarevic D."/>
            <person name="Lipovich L."/>
            <person name="Liu J."/>
            <person name="Liuni S."/>
            <person name="McWilliam S."/>
            <person name="Madan Babu M."/>
            <person name="Madera M."/>
            <person name="Marchionni L."/>
            <person name="Matsuda H."/>
            <person name="Matsuzawa S."/>
            <person name="Miki H."/>
            <person name="Mignone F."/>
            <person name="Miyake S."/>
            <person name="Morris K."/>
            <person name="Mottagui-Tabar S."/>
            <person name="Mulder N."/>
            <person name="Nakano N."/>
            <person name="Nakauchi H."/>
            <person name="Ng P."/>
            <person name="Nilsson R."/>
            <person name="Nishiguchi S."/>
            <person name="Nishikawa S."/>
            <person name="Nori F."/>
            <person name="Ohara O."/>
            <person name="Okazaki Y."/>
            <person name="Orlando V."/>
            <person name="Pang K.C."/>
            <person name="Pavan W.J."/>
            <person name="Pavesi G."/>
            <person name="Pesole G."/>
            <person name="Petrovsky N."/>
            <person name="Piazza S."/>
            <person name="Reed J."/>
            <person name="Reid J.F."/>
            <person name="Ring B.Z."/>
            <person name="Ringwald M."/>
            <person name="Rost B."/>
            <person name="Ruan Y."/>
            <person name="Salzberg S.L."/>
            <person name="Sandelin A."/>
            <person name="Schneider C."/>
            <person name="Schoenbach C."/>
            <person name="Sekiguchi K."/>
            <person name="Semple C.A."/>
            <person name="Seno S."/>
            <person name="Sessa L."/>
            <person name="Sheng Y."/>
            <person name="Shibata Y."/>
            <person name="Shimada H."/>
            <person name="Shimada K."/>
            <person name="Silva D."/>
            <person name="Sinclair B."/>
            <person name="Sperling S."/>
            <person name="Stupka E."/>
            <person name="Sugiura K."/>
            <person name="Sultana R."/>
            <person name="Takenaka Y."/>
            <person name="Taki K."/>
            <person name="Tammoja K."/>
            <person name="Tan S.L."/>
            <person name="Tang S."/>
            <person name="Taylor M.S."/>
            <person name="Tegner J."/>
            <person name="Teichmann S.A."/>
            <person name="Ueda H.R."/>
            <person name="van Nimwegen E."/>
            <person name="Verardo R."/>
            <person name="Wei C.L."/>
            <person name="Yagi K."/>
            <person name="Yamanishi H."/>
            <person name="Zabarovsky E."/>
            <person name="Zhu S."/>
            <person name="Zimmer A."/>
            <person name="Hide W."/>
            <person name="Bult C."/>
            <person name="Grimmond S.M."/>
            <person name="Teasdale R.D."/>
            <person name="Liu E.T."/>
            <person name="Brusic V."/>
            <person name="Quackenbush J."/>
            <person name="Wahlestedt C."/>
            <person name="Mattick J.S."/>
            <person name="Hume D.A."/>
            <person name="Kai C."/>
            <person name="Sasaki D."/>
            <person name="Tomaru Y."/>
            <person name="Fukuda S."/>
            <person name="Kanamori-Katayama M."/>
            <person name="Suzuki M."/>
            <person name="Aoki J."/>
            <person name="Arakawa T."/>
            <person name="Iida J."/>
            <person name="Imamura K."/>
            <person name="Itoh M."/>
            <person name="Kato T."/>
            <person name="Kawaji H."/>
            <person name="Kawagashira N."/>
            <person name="Kawashima T."/>
            <person name="Kojima M."/>
            <person name="Kondo S."/>
            <person name="Konno H."/>
            <person name="Nakano K."/>
            <person name="Ninomiya N."/>
            <person name="Nishio T."/>
            <person name="Okada M."/>
            <person name="Plessy C."/>
            <person name="Shibata K."/>
            <person name="Shiraki T."/>
            <person name="Suzuki S."/>
            <person name="Tagami M."/>
            <person name="Waki K."/>
            <person name="Watahiki A."/>
            <person name="Okamura-Oho Y."/>
            <person name="Suzuki H."/>
            <person name="Kawai J."/>
            <person name="Hayashizaki Y."/>
        </authorList>
    </citation>
    <scope>NUCLEOTIDE SEQUENCE [LARGE SCALE MRNA] (ISOFORM 2)</scope>
    <source>
        <strain>C57BL/6J</strain>
        <tissue>Tongue</tissue>
    </source>
</reference>
<reference key="2">
    <citation type="journal article" date="2009" name="PLoS Biol.">
        <title>Lineage-specific biology revealed by a finished genome assembly of the mouse.</title>
        <authorList>
            <person name="Church D.M."/>
            <person name="Goodstadt L."/>
            <person name="Hillier L.W."/>
            <person name="Zody M.C."/>
            <person name="Goldstein S."/>
            <person name="She X."/>
            <person name="Bult C.J."/>
            <person name="Agarwala R."/>
            <person name="Cherry J.L."/>
            <person name="DiCuccio M."/>
            <person name="Hlavina W."/>
            <person name="Kapustin Y."/>
            <person name="Meric P."/>
            <person name="Maglott D."/>
            <person name="Birtle Z."/>
            <person name="Marques A.C."/>
            <person name="Graves T."/>
            <person name="Zhou S."/>
            <person name="Teague B."/>
            <person name="Potamousis K."/>
            <person name="Churas C."/>
            <person name="Place M."/>
            <person name="Herschleb J."/>
            <person name="Runnheim R."/>
            <person name="Forrest D."/>
            <person name="Amos-Landgraf J."/>
            <person name="Schwartz D.C."/>
            <person name="Cheng Z."/>
            <person name="Lindblad-Toh K."/>
            <person name="Eichler E.E."/>
            <person name="Ponting C.P."/>
        </authorList>
    </citation>
    <scope>NUCLEOTIDE SEQUENCE [LARGE SCALE GENOMIC DNA]</scope>
    <source>
        <strain>C57BL/6J</strain>
    </source>
</reference>
<reference key="3">
    <citation type="journal article" date="2004" name="Genome Res.">
        <title>The status, quality, and expansion of the NIH full-length cDNA project: the Mammalian Gene Collection (MGC).</title>
        <authorList>
            <consortium name="The MGC Project Team"/>
        </authorList>
    </citation>
    <scope>NUCLEOTIDE SEQUENCE [LARGE SCALE MRNA] (ISOFORMS 1 AND 4)</scope>
    <source>
        <tissue>Heart</tissue>
    </source>
</reference>
<reference key="4">
    <citation type="journal article" date="2010" name="Cell">
        <title>A tissue-specific atlas of mouse protein phosphorylation and expression.</title>
        <authorList>
            <person name="Huttlin E.L."/>
            <person name="Jedrychowski M.P."/>
            <person name="Elias J.E."/>
            <person name="Goswami T."/>
            <person name="Rad R."/>
            <person name="Beausoleil S.A."/>
            <person name="Villen J."/>
            <person name="Haas W."/>
            <person name="Sowa M.E."/>
            <person name="Gygi S.P."/>
        </authorList>
    </citation>
    <scope>PHOSPHORYLATION [LARGE SCALE ANALYSIS] AT SER-129 AND SER-792</scope>
    <scope>IDENTIFICATION BY MASS SPECTROMETRY [LARGE SCALE ANALYSIS]</scope>
    <source>
        <tissue>Brain</tissue>
        <tissue>Heart</tissue>
    </source>
</reference>
<reference key="5">
    <citation type="journal article" date="2011" name="J. Biol. Chem.">
        <title>Identification of a novel muscle enriched A-type Lamin interacting protein (MLIP).</title>
        <authorList>
            <person name="Ahmady E."/>
            <person name="Deeke S.A."/>
            <person name="Rabaa S."/>
            <person name="Kouri L."/>
            <person name="Kenney L."/>
            <person name="Stewart A.F."/>
            <person name="Burgon P.G."/>
        </authorList>
    </citation>
    <scope>INTERACTION WITH LMNA</scope>
    <scope>SUBCELLULAR LOCATION</scope>
    <scope>TISSUE SPECIFICITY</scope>
</reference>
<reference key="6">
    <citation type="journal article" date="2012" name="Circ. Res.">
        <title>CIP, a cardiac Isl1-interacting protein, represses cardiomyocyte hypertrophy.</title>
        <authorList>
            <person name="Huang Z.P."/>
            <person name="Young Seok H."/>
            <person name="Zhou B."/>
            <person name="Chen J."/>
            <person name="Chen J.F."/>
            <person name="Tao Y."/>
            <person name="Pu W.T."/>
            <person name="Wang D.Z."/>
        </authorList>
    </citation>
    <scope>FUNCTION</scope>
    <scope>TISSUE SPECIFICITY</scope>
    <scope>SUBCELLULAR LOCATION</scope>
    <scope>DEVELOPMENTAL STAGE</scope>
    <scope>INTERACTION WITH ISL1</scope>
</reference>
<reference key="7">
    <citation type="journal article" date="2015" name="J. Biol. Chem.">
        <title>Deletion of MLIP (muscle-enriched A-type lamin-interacting protein) leads to cardiac hyperactivation of Akt/mammalian target of rapamycin (mTOR) and impaired cardiac adaptation.</title>
        <authorList>
            <person name="Cattin M.E."/>
            <person name="Wang J."/>
            <person name="Weldrick J.J."/>
            <person name="Roeske C.L."/>
            <person name="Mak E."/>
            <person name="Thorn S.L."/>
            <person name="DaSilva J.N."/>
            <person name="Wang Y."/>
            <person name="Lusis A.J."/>
            <person name="Burgon P.G."/>
        </authorList>
    </citation>
    <scope>FUNCTION</scope>
    <scope>DISRUPTION PHENOTYPE</scope>
    <scope>SUBCELLULAR LOCATION</scope>
    <scope>TISSUE SPECIFICITY</scope>
</reference>
<reference key="8">
    <citation type="journal article" date="2015" name="J. Clin. Invest.">
        <title>Cardiomyocyte-enriched protein CIP protects against pathophysiological stresses and regulates cardiac homeostasis.</title>
        <authorList>
            <person name="Huang Z.P."/>
            <person name="Kataoka M."/>
            <person name="Chen J."/>
            <person name="Wu G."/>
            <person name="Ding J."/>
            <person name="Nie M."/>
            <person name="Lin Z."/>
            <person name="Liu J."/>
            <person name="Hu X."/>
            <person name="Ma L."/>
            <person name="Zhou B."/>
            <person name="Wakimoto H."/>
            <person name="Zeng C."/>
            <person name="Kyselovic J."/>
            <person name="Deng Z.L."/>
            <person name="Seidman C.E."/>
            <person name="Seidman J.G."/>
            <person name="Pu W.T."/>
            <person name="Wang D.Z."/>
        </authorList>
    </citation>
    <scope>FUNCTION</scope>
    <scope>DISRUPTION PHENOTYPE</scope>
    <scope>INTERACTION WITH LMNA</scope>
    <scope>SUBCELLULAR LOCATION</scope>
    <scope>TISSUE SPECIFICITY</scope>
</reference>
<reference key="9">
    <citation type="journal article" date="2018" name="J. Biol. Chem.">
        <title>Expression of murine muscle-enriched A-type lamin-interacting protein (MLIP) is regulated by tissue-specific alternative transcription start sites.</title>
        <authorList>
            <person name="Cattin M.E."/>
            <person name="Deeke S.A."/>
            <person name="Dick S.A."/>
            <person name="Verret-Borsos Z.J.A."/>
            <person name="Tennakoon G."/>
            <person name="Gupta R."/>
            <person name="Mak E."/>
            <person name="Roeske C.L."/>
            <person name="Weldrick J.J."/>
            <person name="Megeney L.A."/>
            <person name="Burgon P.G."/>
        </authorList>
    </citation>
    <scope>ALTERNATIVE SPLICING</scope>
    <scope>ALTERNATIVE TRANSCRIPTION INITIATION</scope>
</reference>
<reference key="10">
    <citation type="journal article" date="2021" name="Cells">
        <title>Muscle enriched lamin interacting protein (Mlip) binds chromatin and is required for myoblast differentiation.</title>
        <authorList>
            <person name="Ahmady E."/>
            <person name="Blais A."/>
            <person name="Burgon P.G."/>
        </authorList>
    </citation>
    <scope>FUNCTION</scope>
    <scope>SUBCELLULAR LOCATION</scope>
    <scope>TISSUE SPECIFICITY</scope>
</reference>
<reference key="11">
    <citation type="journal article" date="2022" name="Exp. Biol. Med. (Maywood)">
        <title>The effects of beta-catenin on cardiomyogenesis via Islet-1 and MLIP ubiquitination.</title>
        <authorList>
            <person name="Yan L."/>
            <person name="Xie M."/>
            <person name="Tan B."/>
            <person name="Xu H."/>
            <person name="Yi Q."/>
            <person name="Ye L."/>
            <person name="Zhang X."/>
            <person name="Zhang Y."/>
            <person name="Tian J."/>
            <person name="Zhu J."/>
        </authorList>
    </citation>
    <scope>INDUCTION BY CTNNB1</scope>
    <scope>INTERACTION WITH ISL1</scope>
    <scope>UBIQUITINATION BY UBE3C</scope>
</reference>
<comment type="function">
    <text evidence="3 4 5 7">Required for myoblast differentiation into myotubes, possibly acting as a transcriptional regulator of the myogenic program (PubMed:33802236). Required for cardiac adaptation to stress through integrated regulation of the AKT/mTOR pathways and FOXO1. Regulates cardiac homeostasis and plays a role in the protection against cardiac hypertrophy (PubMed:22343712, PubMed:26359501, PubMed:26436652). Binds chromatin (PubMed:33802236). May act as a transcriptional cofactor for ISL1, repressing its transcriptional activity (PubMed:22343712). May also repress MYOCD transcriptional activity (PubMed:22343712).</text>
</comment>
<comment type="subunit">
    <text evidence="3 8">Directly interacts with LMNA (PubMed:21498514, PubMed:26436652). Interacts with ISL1 (via N-terminal domain); the interaction represses ISL1 transactivator activity (PubMed:22343712, PubMed:36112854). Interactions of ISL1 with MLIP1 and GCN5/KAT2A may be mutually exclusive (PubMed:36112854).</text>
</comment>
<comment type="subcellular location">
    <subcellularLocation>
        <location evidence="2 3 5 7">Nucleus</location>
    </subcellularLocation>
    <subcellularLocation>
        <location evidence="2">Nucleus envelope</location>
    </subcellularLocation>
    <subcellularLocation>
        <location evidence="2">Nucleus</location>
        <location evidence="2">PML body</location>
    </subcellularLocation>
    <subcellularLocation>
        <location evidence="2 3 5">Cytoplasm</location>
        <location evidence="2 3 5">Cytosol</location>
    </subcellularLocation>
    <subcellularLocation>
        <location evidence="4">Cell membrane</location>
        <location evidence="4">Sarcolemma</location>
        <topology evidence="4">Peripheral membrane protein</topology>
        <orientation evidence="4">Cytoplasmic side</orientation>
    </subcellularLocation>
</comment>
<comment type="alternative products">
    <event type="alternative promoter"/>
    <event type="alternative splicing"/>
    <isoform>
        <id>Q5FW52-3</id>
        <name>3</name>
        <sequence type="displayed"/>
    </isoform>
    <isoform>
        <id>Q5FW52-1</id>
        <name>1</name>
        <sequence type="described" ref="VSP_061858 VSP_061861 VSP_061862 VSP_061863"/>
    </isoform>
    <isoform>
        <id>Q5FW52-2</id>
        <name>2</name>
        <sequence type="described" ref="VSP_061858 VSP_061860 VSP_061863"/>
    </isoform>
    <isoform>
        <id>Q5FW52-4</id>
        <name>4</name>
        <sequence type="described" ref="VSP_061859 VSP_061860 VSP_061863"/>
    </isoform>
    <text evidence="2 6">Additional isoforms may exist, which are differentially expressed in tissues.</text>
</comment>
<comment type="tissue specificity">
    <text evidence="2 3 5 7">Predominantly expressed in the heart and skeletal muscle, but detected at lower levels in the lung and brain (at protein level) (PubMed:21498514, PubMed:22343712, PubMed:33802236). Also detected in smooth muscle, thymus and kidney (PubMed:21498514). In brain, expressed by a subpopulation of cells within the hippocampus and cortex (PubMed:21498514). In heart, expressed by cardiomyocytes (PubMed:21498514). Expression is reduced in hypertrophic hearts at the transcript level (PubMed:22343712, PubMed:26359501, PubMed:26436652). However, expression in hypertrophic hearts induced by transverse aortic constriction do not differ from control at the protein level (PubMed:26436652).</text>
</comment>
<comment type="developmental stage">
    <text evidence="3">First detected in heart at 8.5 dpc, becomes progressively restricted to heart from 9.5 dpc to 15.5 dpc. At 9.5 dpc, transiently detected in the truck. From 11.5 dpc to 15.5 dpc, expression is higher in the ventricles of embryonic hearts. During embryogenesis, specifically expressed in cardiomyocytes. In neonatal mice, also expressed in the skeletal muscle. Myocardial expression continue in the adult heart.</text>
</comment>
<comment type="induction">
    <text evidence="8">Up-regulated by beta-catenin/CTNNB1 in mesenchymal stem cells (at protein level). This up-regulation may proceed through the down-regulation of UBE3C ubiquitin ligase by CTNNB1.</text>
</comment>
<comment type="PTM">
    <text evidence="8">May be ubiquitinated by UBE3C ubiquitin ligase; ubiquitination is followed by protein degradation.</text>
</comment>
<comment type="disruption phenotype">
    <text evidence="4 5">Knockout animals are obtained at the expected Mendelian ratio. They are viable and exhibit normal cardiac function despite myocardial metabolic abnormalities and cardiac-specific overactivation of AKT/mTOR pathways (PubMed:26359501, PubMed:26436652). In aged mutants, cardiac function is depressed with increased left ventricular dimension (PubMed:26436652). They show an impaired capacity to adapt to stress such as hypertrophy induced by isoproterenol (ISO). After 9 days of continuous ISO treatment, they display an increase in heart to body weight ratio, thickened interventricular septum and blunted contractile response compared to their wild type littermates (PubMed:26359501). Upon transverse aortic constriction (TAC), animals develop a dramatic cardiac dilation with a significant increase in left ventricular internal dimension and decreased in left ventricular wall thickness. While control mice exhibit a trend toward decreased cardiac contraction, the cardiac function in knockout animals is dramatically impaired after TAC. TAC induces a greater increase in the size of cardiomyocytes and more extensive fibrosis in hearts compared to the control ones (PubMed:26436652). Double knockouts for MLIP and LMNA die sooner than single LMNA knockout. They develop much more severe ventricular dilation and cardiac dysfunction (PubMed:26436652).</text>
</comment>
<comment type="miscellaneous">
    <molecule>Isoform 1</molecule>
    <text evidence="6">Produced by an alternative transcription start site and by alternative splicing. The alternative exon 1, also called 1a, is expressed in heart and skeletal muscle, but not in brain.</text>
</comment>
<comment type="miscellaneous">
    <molecule>Isoform 2</molecule>
    <text evidence="6">Produced by an alternative transcription start site and by alternative splicing. The alternative exon 1, also called 1a, is expressed in heart and skeletal muscle, but not in brain.</text>
</comment>
<comment type="miscellaneous">
    <molecule>Isoform 3</molecule>
    <text evidence="6">Produced by an alternative transcription start site. The alternative exon 1, also called 1b, is expressed in brain and skeletal muscle, but not in heart.</text>
</comment>
<dbReference type="EMBL" id="AK009836">
    <property type="protein sequence ID" value="BAB26534.1"/>
    <property type="molecule type" value="mRNA"/>
</dbReference>
<dbReference type="EMBL" id="AC116577">
    <property type="status" value="NOT_ANNOTATED_CDS"/>
    <property type="molecule type" value="Genomic_DNA"/>
</dbReference>
<dbReference type="EMBL" id="AC123797">
    <property type="status" value="NOT_ANNOTATED_CDS"/>
    <property type="molecule type" value="Genomic_DNA"/>
</dbReference>
<dbReference type="EMBL" id="AC128705">
    <property type="status" value="NOT_ANNOTATED_CDS"/>
    <property type="molecule type" value="Genomic_DNA"/>
</dbReference>
<dbReference type="EMBL" id="AC151731">
    <property type="status" value="NOT_ANNOTATED_CDS"/>
    <property type="molecule type" value="Genomic_DNA"/>
</dbReference>
<dbReference type="EMBL" id="BC089626">
    <property type="protein sequence ID" value="AAH89626.1"/>
    <property type="molecule type" value="mRNA"/>
</dbReference>
<dbReference type="EMBL" id="BC144730">
    <property type="protein sequence ID" value="AAI44731.1"/>
    <property type="molecule type" value="mRNA"/>
</dbReference>
<dbReference type="CCDS" id="CCDS52861.1">
    <molecule id="Q5FW52-1"/>
</dbReference>
<dbReference type="CCDS" id="CCDS90629.1">
    <molecule id="Q5FW52-2"/>
</dbReference>
<dbReference type="CCDS" id="CCDS90630.1">
    <molecule id="Q5FW52-4"/>
</dbReference>
<dbReference type="RefSeq" id="NP_001355914.1">
    <molecule id="Q5FW52-4"/>
    <property type="nucleotide sequence ID" value="NM_001368985.1"/>
</dbReference>
<dbReference type="RefSeq" id="NP_001355917.1">
    <molecule id="Q5FW52-2"/>
    <property type="nucleotide sequence ID" value="NM_001368988.1"/>
</dbReference>
<dbReference type="RefSeq" id="NP_081426.1">
    <molecule id="Q5FW52-1"/>
    <property type="nucleotide sequence ID" value="NM_027150.1"/>
</dbReference>
<dbReference type="SMR" id="Q5FW52"/>
<dbReference type="BioGRID" id="213586">
    <property type="interactions" value="2"/>
</dbReference>
<dbReference type="FunCoup" id="Q5FW52">
    <property type="interactions" value="10"/>
</dbReference>
<dbReference type="IntAct" id="Q5FW52">
    <property type="interactions" value="4"/>
</dbReference>
<dbReference type="MINT" id="Q5FW52"/>
<dbReference type="STRING" id="10090.ENSMUSP00000034910"/>
<dbReference type="GlyGen" id="Q5FW52">
    <property type="glycosylation" value="2 sites"/>
</dbReference>
<dbReference type="iPTMnet" id="Q5FW52"/>
<dbReference type="PhosphoSitePlus" id="Q5FW52"/>
<dbReference type="jPOST" id="Q5FW52"/>
<dbReference type="PaxDb" id="10090-ENSMUSP00000034910"/>
<dbReference type="ProteomicsDB" id="252577">
    <molecule id="Q5FW52-1"/>
</dbReference>
<dbReference type="ProteomicsDB" id="252578">
    <molecule id="Q5FW52-2"/>
</dbReference>
<dbReference type="ProteomicsDB" id="325142"/>
<dbReference type="ProteomicsDB" id="333139"/>
<dbReference type="Antibodypedia" id="59659">
    <property type="antibodies" value="52 antibodies from 19 providers"/>
</dbReference>
<dbReference type="DNASU" id="69642"/>
<dbReference type="Ensembl" id="ENSMUST00000034910.16">
    <molecule id="Q5FW52-1"/>
    <property type="protein sequence ID" value="ENSMUSP00000034910.8"/>
    <property type="gene ID" value="ENSMUSG00000032355.17"/>
</dbReference>
<dbReference type="Ensembl" id="ENSMUST00000183955.8">
    <molecule id="Q5FW52-3"/>
    <property type="protein sequence ID" value="ENSMUSP00000138864.2"/>
    <property type="gene ID" value="ENSMUSG00000032355.17"/>
</dbReference>
<dbReference type="Ensembl" id="ENSMUST00000184848.8">
    <molecule id="Q5FW52-2"/>
    <property type="protein sequence ID" value="ENSMUSP00000139242.2"/>
    <property type="gene ID" value="ENSMUSG00000032355.17"/>
</dbReference>
<dbReference type="Ensembl" id="ENSMUST00000185039.8">
    <molecule id="Q5FW52-4"/>
    <property type="protein sequence ID" value="ENSMUSP00000139109.2"/>
    <property type="gene ID" value="ENSMUSG00000032355.17"/>
</dbReference>
<dbReference type="GeneID" id="69642"/>
<dbReference type="KEGG" id="mmu:69642"/>
<dbReference type="UCSC" id="uc009qtg.2">
    <molecule id="Q5FW52-3"/>
    <property type="organism name" value="mouse"/>
</dbReference>
<dbReference type="UCSC" id="uc009qth.2">
    <molecule id="Q5FW52-2"/>
    <property type="organism name" value="mouse"/>
</dbReference>
<dbReference type="AGR" id="MGI:1916892"/>
<dbReference type="CTD" id="90523"/>
<dbReference type="MGI" id="MGI:1916892">
    <property type="gene designation" value="Mlip"/>
</dbReference>
<dbReference type="VEuPathDB" id="HostDB:ENSMUSG00000032355"/>
<dbReference type="eggNOG" id="ENOG502QTJV">
    <property type="taxonomic scope" value="Eukaryota"/>
</dbReference>
<dbReference type="GeneTree" id="ENSGT00390000015862"/>
<dbReference type="HOGENOM" id="CLU_013619_0_0_1"/>
<dbReference type="InParanoid" id="Q5FW52"/>
<dbReference type="OMA" id="TSCEMRH"/>
<dbReference type="OrthoDB" id="9907594at2759"/>
<dbReference type="PhylomeDB" id="Q5FW52"/>
<dbReference type="TreeFam" id="TF330818"/>
<dbReference type="BioGRID-ORCS" id="69642">
    <property type="hits" value="0 hits in 76 CRISPR screens"/>
</dbReference>
<dbReference type="CD-CODE" id="CE726F99">
    <property type="entry name" value="Postsynaptic density"/>
</dbReference>
<dbReference type="ChiTaRS" id="Mlip">
    <property type="organism name" value="mouse"/>
</dbReference>
<dbReference type="PRO" id="PR:Q5FW52"/>
<dbReference type="Proteomes" id="UP000000589">
    <property type="component" value="Chromosome 9"/>
</dbReference>
<dbReference type="RNAct" id="Q5FW52">
    <property type="molecule type" value="protein"/>
</dbReference>
<dbReference type="Bgee" id="ENSMUSG00000032355">
    <property type="expression patterns" value="Expressed in sciatic nerve and 107 other cell types or tissues"/>
</dbReference>
<dbReference type="ExpressionAtlas" id="Q5FW52">
    <property type="expression patterns" value="baseline and differential"/>
</dbReference>
<dbReference type="GO" id="GO:0005829">
    <property type="term" value="C:cytosol"/>
    <property type="evidence" value="ECO:0007669"/>
    <property type="project" value="UniProtKB-SubCell"/>
</dbReference>
<dbReference type="GO" id="GO:0005635">
    <property type="term" value="C:nuclear envelope"/>
    <property type="evidence" value="ECO:0000314"/>
    <property type="project" value="UniProtKB"/>
</dbReference>
<dbReference type="GO" id="GO:0031981">
    <property type="term" value="C:nuclear lumen"/>
    <property type="evidence" value="ECO:0000314"/>
    <property type="project" value="UniProtKB"/>
</dbReference>
<dbReference type="GO" id="GO:0005634">
    <property type="term" value="C:nucleus"/>
    <property type="evidence" value="ECO:0000314"/>
    <property type="project" value="UniProtKB"/>
</dbReference>
<dbReference type="GO" id="GO:0016605">
    <property type="term" value="C:PML body"/>
    <property type="evidence" value="ECO:0000314"/>
    <property type="project" value="UniProtKB"/>
</dbReference>
<dbReference type="GO" id="GO:0042383">
    <property type="term" value="C:sarcolemma"/>
    <property type="evidence" value="ECO:0000314"/>
    <property type="project" value="UniProtKB"/>
</dbReference>
<dbReference type="GO" id="GO:0003677">
    <property type="term" value="F:DNA binding"/>
    <property type="evidence" value="ECO:0007669"/>
    <property type="project" value="UniProtKB-KW"/>
</dbReference>
<dbReference type="GO" id="GO:0005521">
    <property type="term" value="F:lamin binding"/>
    <property type="evidence" value="ECO:0000353"/>
    <property type="project" value="UniProtKB"/>
</dbReference>
<dbReference type="GO" id="GO:0003714">
    <property type="term" value="F:transcription corepressor activity"/>
    <property type="evidence" value="ECO:0000316"/>
    <property type="project" value="MGI"/>
</dbReference>
<dbReference type="GO" id="GO:0010614">
    <property type="term" value="P:negative regulation of cardiac muscle hypertrophy"/>
    <property type="evidence" value="ECO:0000314"/>
    <property type="project" value="MGI"/>
</dbReference>
<dbReference type="GO" id="GO:1903243">
    <property type="term" value="P:negative regulation of cardiac muscle hypertrophy in response to stress"/>
    <property type="evidence" value="ECO:0000315"/>
    <property type="project" value="UniProtKB"/>
</dbReference>
<dbReference type="GO" id="GO:0000122">
    <property type="term" value="P:negative regulation of transcription by RNA polymerase II"/>
    <property type="evidence" value="ECO:0000316"/>
    <property type="project" value="MGI"/>
</dbReference>
<dbReference type="GO" id="GO:0006366">
    <property type="term" value="P:transcription by RNA polymerase II"/>
    <property type="evidence" value="ECO:0000316"/>
    <property type="project" value="MGI"/>
</dbReference>
<dbReference type="InterPro" id="IPR029331">
    <property type="entry name" value="MLIP"/>
</dbReference>
<dbReference type="PANTHER" id="PTHR31514:SF1">
    <property type="entry name" value="MUSCULAR LMNA-INTERACTING PROTEIN"/>
    <property type="match status" value="1"/>
</dbReference>
<dbReference type="PANTHER" id="PTHR31514">
    <property type="entry name" value="MUSCULAR LMNA-INTERACTING PROTEIN MLIP"/>
    <property type="match status" value="1"/>
</dbReference>
<dbReference type="Pfam" id="PF15274">
    <property type="entry name" value="MLIP"/>
    <property type="match status" value="1"/>
</dbReference>
<feature type="chain" id="PRO_0000089539" description="Muscular LMNA-interacting protein">
    <location>
        <begin position="1"/>
        <end position="967"/>
    </location>
</feature>
<feature type="region of interest" description="Disordered" evidence="1">
    <location>
        <begin position="132"/>
        <end position="154"/>
    </location>
</feature>
<feature type="region of interest" description="Required for interaction with ISL1" evidence="3">
    <location>
        <begin position="144"/>
        <end position="811"/>
    </location>
</feature>
<feature type="region of interest" description="Disordered" evidence="1">
    <location>
        <begin position="302"/>
        <end position="336"/>
    </location>
</feature>
<feature type="region of interest" description="Disordered" evidence="1">
    <location>
        <begin position="432"/>
        <end position="462"/>
    </location>
</feature>
<feature type="region of interest" description="Disordered" evidence="1">
    <location>
        <begin position="506"/>
        <end position="628"/>
    </location>
</feature>
<feature type="region of interest" description="Disordered" evidence="1">
    <location>
        <begin position="644"/>
        <end position="685"/>
    </location>
</feature>
<feature type="region of interest" description="Disordered" evidence="1">
    <location>
        <begin position="786"/>
        <end position="838"/>
    </location>
</feature>
<feature type="region of interest" description="Disordered" evidence="1">
    <location>
        <begin position="929"/>
        <end position="967"/>
    </location>
</feature>
<feature type="compositionally biased region" description="Low complexity" evidence="1">
    <location>
        <begin position="437"/>
        <end position="455"/>
    </location>
</feature>
<feature type="compositionally biased region" description="Polar residues" evidence="1">
    <location>
        <begin position="508"/>
        <end position="523"/>
    </location>
</feature>
<feature type="compositionally biased region" description="Low complexity" evidence="1">
    <location>
        <begin position="528"/>
        <end position="541"/>
    </location>
</feature>
<feature type="compositionally biased region" description="Basic and acidic residues" evidence="1">
    <location>
        <begin position="543"/>
        <end position="556"/>
    </location>
</feature>
<feature type="compositionally biased region" description="Polar residues" evidence="1">
    <location>
        <begin position="558"/>
        <end position="567"/>
    </location>
</feature>
<feature type="compositionally biased region" description="Polar residues" evidence="1">
    <location>
        <begin position="658"/>
        <end position="685"/>
    </location>
</feature>
<feature type="compositionally biased region" description="Polar residues" evidence="1">
    <location>
        <begin position="800"/>
        <end position="811"/>
    </location>
</feature>
<feature type="compositionally biased region" description="Low complexity" evidence="1">
    <location>
        <begin position="826"/>
        <end position="835"/>
    </location>
</feature>
<feature type="compositionally biased region" description="Polar residues" evidence="1">
    <location>
        <begin position="938"/>
        <end position="947"/>
    </location>
</feature>
<feature type="compositionally biased region" description="Basic and acidic residues" evidence="1">
    <location>
        <begin position="958"/>
        <end position="967"/>
    </location>
</feature>
<feature type="modified residue" description="Phosphoserine" evidence="12">
    <location>
        <position position="129"/>
    </location>
</feature>
<feature type="modified residue" description="Phosphoserine" evidence="12">
    <location>
        <position position="792"/>
    </location>
</feature>
<feature type="splice variant" id="VSP_061858" description="In isoform 1 and isoform 2.">
    <original>MTSCILAGSLETTPKVSPGDPEAKPLIFTFVPTLRRLPTHIQLADTSKFLVKIPEEPTDKSPETVNR</original>
    <variation>MEFGKHEPGSSLKRNKNLEEGVT</variation>
    <location>
        <begin position="1"/>
        <end position="67"/>
    </location>
</feature>
<feature type="splice variant" id="VSP_061859" description="In isoform 4.">
    <original>MTSCILAGSLETTPK</original>
    <variation>MEFGKHEPGSSLKRNKNLEEGVT</variation>
    <location>
        <begin position="1"/>
        <end position="15"/>
    </location>
</feature>
<feature type="splice variant" id="VSP_061860" description="In isoform 2 and isoform 4.">
    <location>
        <begin position="199"/>
        <end position="807"/>
    </location>
</feature>
<feature type="splice variant" id="VSP_061861" description="In isoform 1.">
    <location>
        <begin position="199"/>
        <end position="737"/>
    </location>
</feature>
<feature type="splice variant" id="VSP_061862" description="In isoform 1.">
    <location>
        <begin position="760"/>
        <end position="787"/>
    </location>
</feature>
<feature type="splice variant" id="VSP_061863" description="In isoform 1, isoform 2 and isoform 4.">
    <location>
        <begin position="881"/>
        <end position="967"/>
    </location>
</feature>
<feature type="sequence conflict" description="In Ref. 1; BAB26534." evidence="10" ref="1">
    <original>E</original>
    <variation>G</variation>
    <location>
        <position position="132"/>
    </location>
</feature>
<feature type="sequence conflict" description="In Ref. 1; BAB26534." evidence="10" ref="1">
    <original>S</original>
    <variation>N</variation>
    <location>
        <position position="163"/>
    </location>
</feature>
<gene>
    <name evidence="11" type="primary">Mlip</name>
    <name evidence="9" type="synonym">Cip</name>
</gene>
<accession>Q5FW52</accession>
<accession>B7ZMP8</accession>
<accession>Q9D6X9</accession>
<accession>V9GWW6</accession>
<sequence>MTSCILAGSLETTPKVSPGDPEAKPLIFTFVPTLRRLPTHIQLADTSKFLVKIPEEPTDKSPETVNRFEYSDHMTFSSESKQERVQRILDYPSEVSGRNSQQKEFNTKEPQGMQKGDLFKAEYVFIVDSDGEDEATCRQGEQGPPGGPGNIATRPKSLAISSSLASDVVRPKVRGADLKTSSHPEIPHGIAPQQKHGLLISPTTSEQLAHKPPAFSFVSPTNQKTPPVPANVSGATVLREFHTRRLDVTGASEEETTTYFHSTAHDSPLSAWKGASTLVVSPSAQLSGSSLCGSNVTDHTRGLASEAQKKMSTSNVLNPKEDVRTCPAPASGASLTSPSASYIPVRIVMHSLSPSPKPLTSSSHGSLSTVCSQMSSSGSLSKSGLKSPVPSRLSLLTAILKSNPSHQRPLSPASCPTFSLNSLASSTLALDQKVKQTPPTSKKSLSSGSLTTGSTEQEHQASAASYQPCHLPFFSKTTPLSQAQPLSPLALASNSCASMDIEKIPGSTLRSNTTSPQPQTDTFSLADVPSVTPVLSPLSSSKGRKDGDSRTPEKNRNICIQPSTLASTPPVDESLALSSSGKGFHPSPALSDLIDRSKRACSQQHPGQRPSPSALPTPPVSRAASASHPHLGCSILPLQSSLTQTLQPSPSALRPSCGSATCPSRTQMPENTASNHSSRVSTPSLPVSLTRTKELFSPCALSMSAGPENKKPKQYKTMSSYKAFAAIPTNTLLLEQKALDEPARTESNSKASVLDLPVEFCFPAQLRQQTEELCATIDKVLQDSLSMHSSDSPSRPPQTMLGSETIKTPTTHPRAAGRETKYANLSSSSSTASESQLTKPGVIRPVPVKSKLLLRKDEEVYEPNPFSKYLEDNSGLFSEQDMAIPHKPVSLHPLYQSKLYPPAKSLLHPQTLSHADCLTPGSFSHLSSFSVRDEQEKSPTLLSQDTYNKLGHPMVTIPEHDTLDSKE</sequence>
<keyword id="KW-0877">Alternative promoter usage</keyword>
<keyword id="KW-0025">Alternative splicing</keyword>
<keyword id="KW-1003">Cell membrane</keyword>
<keyword id="KW-0963">Cytoplasm</keyword>
<keyword id="KW-0238">DNA-binding</keyword>
<keyword id="KW-0472">Membrane</keyword>
<keyword id="KW-0539">Nucleus</keyword>
<keyword id="KW-0597">Phosphoprotein</keyword>
<keyword id="KW-1185">Reference proteome</keyword>
<keyword id="KW-0832">Ubl conjugation</keyword>